<accession>Q07HN8</accession>
<sequence>MLKEIRPALVMLVALTALTGLVYPLAMTGVAQLLLPAQANGSLIEQNGQVIGSALIGQAFTDARYFHGRPSATTAPDPQDSSKTVPSPYNAANSMGANLGPTSAALKERLTADVDAAKQDNPTSPVPVDLVTSSASGLDPDISPEAALFQVPRVAKARGIDEAKLRALIDSQIQGRELGLLGEPRVNVLKLNLALDRMAA</sequence>
<gene>
    <name evidence="1" type="primary">kdpC</name>
    <name type="ordered locus">RPE_4626</name>
</gene>
<proteinExistence type="inferred from homology"/>
<comment type="function">
    <text evidence="1">Part of the high-affinity ATP-driven potassium transport (or Kdp) system, which catalyzes the hydrolysis of ATP coupled with the electrogenic transport of potassium into the cytoplasm. This subunit acts as a catalytic chaperone that increases the ATP-binding affinity of the ATP-hydrolyzing subunit KdpB by the formation of a transient KdpB/KdpC/ATP ternary complex.</text>
</comment>
<comment type="subunit">
    <text evidence="1">The system is composed of three essential subunits: KdpA, KdpB and KdpC.</text>
</comment>
<comment type="subcellular location">
    <subcellularLocation>
        <location evidence="1">Cell inner membrane</location>
        <topology evidence="1">Single-pass membrane protein</topology>
    </subcellularLocation>
</comment>
<comment type="similarity">
    <text evidence="1">Belongs to the KdpC family.</text>
</comment>
<name>KDPC_RHOP5</name>
<keyword id="KW-0067">ATP-binding</keyword>
<keyword id="KW-0997">Cell inner membrane</keyword>
<keyword id="KW-1003">Cell membrane</keyword>
<keyword id="KW-0406">Ion transport</keyword>
<keyword id="KW-0472">Membrane</keyword>
<keyword id="KW-0547">Nucleotide-binding</keyword>
<keyword id="KW-0630">Potassium</keyword>
<keyword id="KW-0633">Potassium transport</keyword>
<keyword id="KW-0812">Transmembrane</keyword>
<keyword id="KW-1133">Transmembrane helix</keyword>
<keyword id="KW-0813">Transport</keyword>
<feature type="chain" id="PRO_1000022305" description="Potassium-transporting ATPase KdpC subunit">
    <location>
        <begin position="1"/>
        <end position="200"/>
    </location>
</feature>
<feature type="transmembrane region" description="Helical" evidence="1">
    <location>
        <begin position="9"/>
        <end position="31"/>
    </location>
</feature>
<feature type="region of interest" description="Disordered" evidence="2">
    <location>
        <begin position="68"/>
        <end position="97"/>
    </location>
</feature>
<feature type="compositionally biased region" description="Polar residues" evidence="2">
    <location>
        <begin position="71"/>
        <end position="96"/>
    </location>
</feature>
<evidence type="ECO:0000255" key="1">
    <source>
        <dbReference type="HAMAP-Rule" id="MF_00276"/>
    </source>
</evidence>
<evidence type="ECO:0000256" key="2">
    <source>
        <dbReference type="SAM" id="MobiDB-lite"/>
    </source>
</evidence>
<dbReference type="EMBL" id="CP000463">
    <property type="protein sequence ID" value="ABJ08546.1"/>
    <property type="molecule type" value="Genomic_DNA"/>
</dbReference>
<dbReference type="SMR" id="Q07HN8"/>
<dbReference type="STRING" id="316055.RPE_4626"/>
<dbReference type="KEGG" id="rpe:RPE_4626"/>
<dbReference type="eggNOG" id="COG2156">
    <property type="taxonomic scope" value="Bacteria"/>
</dbReference>
<dbReference type="HOGENOM" id="CLU_077094_2_0_5"/>
<dbReference type="OrthoDB" id="9788285at2"/>
<dbReference type="GO" id="GO:0005886">
    <property type="term" value="C:plasma membrane"/>
    <property type="evidence" value="ECO:0007669"/>
    <property type="project" value="UniProtKB-SubCell"/>
</dbReference>
<dbReference type="GO" id="GO:0005524">
    <property type="term" value="F:ATP binding"/>
    <property type="evidence" value="ECO:0007669"/>
    <property type="project" value="UniProtKB-UniRule"/>
</dbReference>
<dbReference type="GO" id="GO:0008556">
    <property type="term" value="F:P-type potassium transmembrane transporter activity"/>
    <property type="evidence" value="ECO:0007669"/>
    <property type="project" value="InterPro"/>
</dbReference>
<dbReference type="HAMAP" id="MF_00276">
    <property type="entry name" value="KdpC"/>
    <property type="match status" value="1"/>
</dbReference>
<dbReference type="InterPro" id="IPR003820">
    <property type="entry name" value="KdpC"/>
</dbReference>
<dbReference type="NCBIfam" id="TIGR00681">
    <property type="entry name" value="kdpC"/>
    <property type="match status" value="1"/>
</dbReference>
<dbReference type="NCBIfam" id="NF001454">
    <property type="entry name" value="PRK00315.1"/>
    <property type="match status" value="1"/>
</dbReference>
<dbReference type="NCBIfam" id="NF010603">
    <property type="entry name" value="PRK13999.1"/>
    <property type="match status" value="1"/>
</dbReference>
<dbReference type="PANTHER" id="PTHR30042">
    <property type="entry name" value="POTASSIUM-TRANSPORTING ATPASE C CHAIN"/>
    <property type="match status" value="1"/>
</dbReference>
<dbReference type="PANTHER" id="PTHR30042:SF2">
    <property type="entry name" value="POTASSIUM-TRANSPORTING ATPASE KDPC SUBUNIT"/>
    <property type="match status" value="1"/>
</dbReference>
<dbReference type="Pfam" id="PF02669">
    <property type="entry name" value="KdpC"/>
    <property type="match status" value="1"/>
</dbReference>
<dbReference type="PIRSF" id="PIRSF001296">
    <property type="entry name" value="K_ATPase_KdpC"/>
    <property type="match status" value="1"/>
</dbReference>
<protein>
    <recommendedName>
        <fullName evidence="1">Potassium-transporting ATPase KdpC subunit</fullName>
    </recommendedName>
    <alternativeName>
        <fullName evidence="1">ATP phosphohydrolase [potassium-transporting] C chain</fullName>
    </alternativeName>
    <alternativeName>
        <fullName evidence="1">Potassium-binding and translocating subunit C</fullName>
    </alternativeName>
    <alternativeName>
        <fullName evidence="1">Potassium-translocating ATPase C chain</fullName>
    </alternativeName>
</protein>
<reference key="1">
    <citation type="submission" date="2006-09" db="EMBL/GenBank/DDBJ databases">
        <title>Complete sequence of Rhodopseudomonas palustris BisA53.</title>
        <authorList>
            <consortium name="US DOE Joint Genome Institute"/>
            <person name="Copeland A."/>
            <person name="Lucas S."/>
            <person name="Lapidus A."/>
            <person name="Barry K."/>
            <person name="Detter J.C."/>
            <person name="Glavina del Rio T."/>
            <person name="Hammon N."/>
            <person name="Israni S."/>
            <person name="Dalin E."/>
            <person name="Tice H."/>
            <person name="Pitluck S."/>
            <person name="Chain P."/>
            <person name="Malfatti S."/>
            <person name="Shin M."/>
            <person name="Vergez L."/>
            <person name="Schmutz J."/>
            <person name="Larimer F."/>
            <person name="Land M."/>
            <person name="Hauser L."/>
            <person name="Pelletier D.A."/>
            <person name="Kyrpides N."/>
            <person name="Kim E."/>
            <person name="Harwood C.S."/>
            <person name="Oda Y."/>
            <person name="Richardson P."/>
        </authorList>
    </citation>
    <scope>NUCLEOTIDE SEQUENCE [LARGE SCALE GENOMIC DNA]</scope>
    <source>
        <strain>BisA53</strain>
    </source>
</reference>
<organism>
    <name type="scientific">Rhodopseudomonas palustris (strain BisA53)</name>
    <dbReference type="NCBI Taxonomy" id="316055"/>
    <lineage>
        <taxon>Bacteria</taxon>
        <taxon>Pseudomonadati</taxon>
        <taxon>Pseudomonadota</taxon>
        <taxon>Alphaproteobacteria</taxon>
        <taxon>Hyphomicrobiales</taxon>
        <taxon>Nitrobacteraceae</taxon>
        <taxon>Rhodopseudomonas</taxon>
    </lineage>
</organism>